<protein>
    <recommendedName>
        <fullName evidence="1">Bifunctional protein Aas</fullName>
    </recommendedName>
    <domain>
        <recommendedName>
            <fullName evidence="1">2-acylglycerophosphoethanolamine acyltransferase</fullName>
            <ecNumber evidence="1">2.3.1.40</ecNumber>
        </recommendedName>
        <alternativeName>
            <fullName evidence="1">2-acyl-GPE acyltransferase</fullName>
        </alternativeName>
        <alternativeName>
            <fullName evidence="1">Acyl-[acyl-carrier-protein]--phospholipid O-acyltransferase</fullName>
        </alternativeName>
    </domain>
    <domain>
        <recommendedName>
            <fullName evidence="1">Acyl-[acyl-carrier-protein] synthetase</fullName>
            <ecNumber evidence="1">6.2.1.20</ecNumber>
        </recommendedName>
        <alternativeName>
            <fullName evidence="1">Acyl-ACP synthetase</fullName>
        </alternativeName>
        <alternativeName>
            <fullName evidence="1">Long-chain-fatty-acid--[acyl-carrier-protein] ligase</fullName>
        </alternativeName>
    </domain>
</protein>
<gene>
    <name evidence="1" type="primary">aas</name>
    <name type="ordered locus">EcHS_A2983</name>
</gene>
<proteinExistence type="inferred from homology"/>
<comment type="function">
    <text evidence="1">Plays a role in lysophospholipid acylation. Transfers fatty acids to the 1-position via an enzyme-bound acyl-ACP intermediate in the presence of ATP and magnesium. Its physiological function is to regenerate phosphatidylethanolamine from 2-acyl-glycero-3-phosphoethanolamine (2-acyl-GPE) formed by transacylation reactions or degradation by phospholipase A1.</text>
</comment>
<comment type="catalytic activity">
    <reaction evidence="1">
        <text>a 2-acyl-sn-glycero-3-phosphoethanolamine + a fatty acyl-[ACP] = a 1,2-diacyl-sn-glycero-3-phosphoethanolamine + holo-[ACP]</text>
        <dbReference type="Rhea" id="RHEA:10304"/>
        <dbReference type="Rhea" id="RHEA-COMP:9685"/>
        <dbReference type="Rhea" id="RHEA-COMP:14125"/>
        <dbReference type="ChEBI" id="CHEBI:64479"/>
        <dbReference type="ChEBI" id="CHEBI:64612"/>
        <dbReference type="ChEBI" id="CHEBI:65213"/>
        <dbReference type="ChEBI" id="CHEBI:138651"/>
        <dbReference type="EC" id="2.3.1.40"/>
    </reaction>
</comment>
<comment type="catalytic activity">
    <reaction evidence="1">
        <text>a long-chain fatty acid + holo-[ACP] + ATP = a long-chain fatty acyl-[ACP] + AMP + diphosphate</text>
        <dbReference type="Rhea" id="RHEA:45588"/>
        <dbReference type="Rhea" id="RHEA-COMP:9685"/>
        <dbReference type="Rhea" id="RHEA-COMP:12682"/>
        <dbReference type="ChEBI" id="CHEBI:30616"/>
        <dbReference type="ChEBI" id="CHEBI:33019"/>
        <dbReference type="ChEBI" id="CHEBI:57560"/>
        <dbReference type="ChEBI" id="CHEBI:64479"/>
        <dbReference type="ChEBI" id="CHEBI:133243"/>
        <dbReference type="ChEBI" id="CHEBI:456215"/>
        <dbReference type="EC" id="6.2.1.20"/>
    </reaction>
</comment>
<comment type="subcellular location">
    <subcellularLocation>
        <location evidence="1">Cell inner membrane</location>
        <topology evidence="1">Multi-pass membrane protein</topology>
    </subcellularLocation>
</comment>
<comment type="similarity">
    <text evidence="1">In the N-terminal section; belongs to the 2-acyl-GPE acetyltransferase family.</text>
</comment>
<comment type="similarity">
    <text evidence="1">In the C-terminal section; belongs to the ATP-dependent AMP-binding enzyme family.</text>
</comment>
<name>AAS_ECOHS</name>
<keyword id="KW-0012">Acyltransferase</keyword>
<keyword id="KW-0067">ATP-binding</keyword>
<keyword id="KW-0997">Cell inner membrane</keyword>
<keyword id="KW-1003">Cell membrane</keyword>
<keyword id="KW-0436">Ligase</keyword>
<keyword id="KW-0472">Membrane</keyword>
<keyword id="KW-0511">Multifunctional enzyme</keyword>
<keyword id="KW-0547">Nucleotide-binding</keyword>
<keyword id="KW-0808">Transferase</keyword>
<keyword id="KW-0812">Transmembrane</keyword>
<keyword id="KW-1133">Transmembrane helix</keyword>
<sequence length="719" mass="80682">MLFSFFRNLCRVLYRVRVTGDTQALKGERVLITPNHVSFIDGILLGLFLPVRPVFAVYTSISQQWYMRWLKSFIDFVPLDPTQPMAIKHLVRLVEQGRPVVIFPEGRITTTGSLMKIYDGAGFVAAKSGATVIPVRIEGAELTHFSRLKGLVKRRLFPQITLHILPPTQVAMPDAPRARDRRKIAGEMLHQIMMEARMAVRPRETLYESLLSAMYRFGAGKKCVEDVNFTPDSYRKLLTKTLFVGRILEKYSVEGERIGLMLPNAGISAAVIFGAIARRRIPAMMNYTAGVKGLTSAITAAEIKTIFTSRQFLDKGKLWHLPEQLTQVRWVYLEDLKADVTTADKVWIFAHLLMPRLAQVKQQPEEEALILFTSGSEGHPKGVVHSHKSILANVEQIKTIADFTTNDRFMSALPLFHSFGLTVGLFTPLLTGAEVFLYPSPLHYRIVPELVYDRSCTVLFGTSTFLGHYARFANPYDFYRLRYVVAGAEKLQESTKQLWQDKFGLRILEGYGVTECAPVVSINVPMAAKPGTVGRILPGMDARLLSVPGIEEGGRLQLKGPNIMNGYLRVEKPGVLEVPTAENVRGEMERGWYDTGDIVRFDEQGFVQIQGRAKRFAKIAGEMVSLEMVEQLALGVSPDKVHATAIKSDASKGEALVLFTTDNELTRDKLQQYAREHGVPELAVPRDIRYLKQMPLLGSGKPDFVTLKSWVDEAEQHDE</sequence>
<organism>
    <name type="scientific">Escherichia coli O9:H4 (strain HS)</name>
    <dbReference type="NCBI Taxonomy" id="331112"/>
    <lineage>
        <taxon>Bacteria</taxon>
        <taxon>Pseudomonadati</taxon>
        <taxon>Pseudomonadota</taxon>
        <taxon>Gammaproteobacteria</taxon>
        <taxon>Enterobacterales</taxon>
        <taxon>Enterobacteriaceae</taxon>
        <taxon>Escherichia</taxon>
    </lineage>
</organism>
<accession>A8A3X0</accession>
<feature type="chain" id="PRO_1000065635" description="Bifunctional protein Aas">
    <location>
        <begin position="1"/>
        <end position="719"/>
    </location>
</feature>
<feature type="transmembrane region" description="Helical" evidence="1">
    <location>
        <begin position="258"/>
        <end position="277"/>
    </location>
</feature>
<feature type="transmembrane region" description="Helical" evidence="1">
    <location>
        <begin position="409"/>
        <end position="433"/>
    </location>
</feature>
<feature type="region of interest" description="Acyltransferase">
    <location>
        <begin position="15"/>
        <end position="138"/>
    </location>
</feature>
<feature type="region of interest" description="AMP-binding">
    <location>
        <begin position="233"/>
        <end position="646"/>
    </location>
</feature>
<feature type="active site" evidence="1">
    <location>
        <position position="36"/>
    </location>
</feature>
<evidence type="ECO:0000255" key="1">
    <source>
        <dbReference type="HAMAP-Rule" id="MF_01162"/>
    </source>
</evidence>
<dbReference type="EC" id="2.3.1.40" evidence="1"/>
<dbReference type="EC" id="6.2.1.20" evidence="1"/>
<dbReference type="EMBL" id="CP000802">
    <property type="protein sequence ID" value="ABV07224.1"/>
    <property type="molecule type" value="Genomic_DNA"/>
</dbReference>
<dbReference type="RefSeq" id="WP_000899049.1">
    <property type="nucleotide sequence ID" value="NC_009800.1"/>
</dbReference>
<dbReference type="SMR" id="A8A3X0"/>
<dbReference type="GeneID" id="75203772"/>
<dbReference type="KEGG" id="ecx:EcHS_A2983"/>
<dbReference type="HOGENOM" id="CLU_000022_59_8_6"/>
<dbReference type="GO" id="GO:0005886">
    <property type="term" value="C:plasma membrane"/>
    <property type="evidence" value="ECO:0007669"/>
    <property type="project" value="UniProtKB-SubCell"/>
</dbReference>
<dbReference type="GO" id="GO:0008779">
    <property type="term" value="F:acyl-[acyl-carrier-protein]-phospholipid O-acyltransferase activity"/>
    <property type="evidence" value="ECO:0007669"/>
    <property type="project" value="UniProtKB-UniRule"/>
</dbReference>
<dbReference type="GO" id="GO:0005524">
    <property type="term" value="F:ATP binding"/>
    <property type="evidence" value="ECO:0007669"/>
    <property type="project" value="UniProtKB-KW"/>
</dbReference>
<dbReference type="GO" id="GO:0008922">
    <property type="term" value="F:long-chain fatty acid [acyl-carrier-protein] ligase activity"/>
    <property type="evidence" value="ECO:0007669"/>
    <property type="project" value="UniProtKB-UniRule"/>
</dbReference>
<dbReference type="GO" id="GO:0031956">
    <property type="term" value="F:medium-chain fatty acid-CoA ligase activity"/>
    <property type="evidence" value="ECO:0007669"/>
    <property type="project" value="TreeGrafter"/>
</dbReference>
<dbReference type="GO" id="GO:0006631">
    <property type="term" value="P:fatty acid metabolic process"/>
    <property type="evidence" value="ECO:0007669"/>
    <property type="project" value="InterPro"/>
</dbReference>
<dbReference type="GO" id="GO:0008654">
    <property type="term" value="P:phospholipid biosynthetic process"/>
    <property type="evidence" value="ECO:0007669"/>
    <property type="project" value="InterPro"/>
</dbReference>
<dbReference type="CDD" id="cd05909">
    <property type="entry name" value="AAS_C"/>
    <property type="match status" value="1"/>
</dbReference>
<dbReference type="CDD" id="cd07989">
    <property type="entry name" value="LPLAT_AGPAT-like"/>
    <property type="match status" value="1"/>
</dbReference>
<dbReference type="FunFam" id="3.30.300.30:FF:000009">
    <property type="entry name" value="Bifunctional protein Aas"/>
    <property type="match status" value="1"/>
</dbReference>
<dbReference type="FunFam" id="3.40.50.12780:FF:000009">
    <property type="entry name" value="Bifunctional protein Aas"/>
    <property type="match status" value="1"/>
</dbReference>
<dbReference type="Gene3D" id="3.30.300.30">
    <property type="match status" value="1"/>
</dbReference>
<dbReference type="Gene3D" id="3.40.50.12780">
    <property type="entry name" value="N-terminal domain of ligase-like"/>
    <property type="match status" value="1"/>
</dbReference>
<dbReference type="HAMAP" id="MF_01162">
    <property type="entry name" value="Aas"/>
    <property type="match status" value="1"/>
</dbReference>
<dbReference type="InterPro" id="IPR023775">
    <property type="entry name" value="Aas"/>
</dbReference>
<dbReference type="InterPro" id="IPR045851">
    <property type="entry name" value="AMP-bd_C_sf"/>
</dbReference>
<dbReference type="InterPro" id="IPR020845">
    <property type="entry name" value="AMP-binding_CS"/>
</dbReference>
<dbReference type="InterPro" id="IPR000873">
    <property type="entry name" value="AMP-dep_synth/lig_dom"/>
</dbReference>
<dbReference type="InterPro" id="IPR042099">
    <property type="entry name" value="ANL_N_sf"/>
</dbReference>
<dbReference type="InterPro" id="IPR002123">
    <property type="entry name" value="Plipid/glycerol_acylTrfase"/>
</dbReference>
<dbReference type="NCBIfam" id="NF005959">
    <property type="entry name" value="PRK08043.1"/>
    <property type="match status" value="1"/>
</dbReference>
<dbReference type="PANTHER" id="PTHR43201">
    <property type="entry name" value="ACYL-COA SYNTHETASE"/>
    <property type="match status" value="1"/>
</dbReference>
<dbReference type="PANTHER" id="PTHR43201:SF8">
    <property type="entry name" value="ACYL-COA SYNTHETASE FAMILY MEMBER 3"/>
    <property type="match status" value="1"/>
</dbReference>
<dbReference type="Pfam" id="PF01553">
    <property type="entry name" value="Acyltransferase"/>
    <property type="match status" value="1"/>
</dbReference>
<dbReference type="Pfam" id="PF00501">
    <property type="entry name" value="AMP-binding"/>
    <property type="match status" value="1"/>
</dbReference>
<dbReference type="SMART" id="SM00563">
    <property type="entry name" value="PlsC"/>
    <property type="match status" value="1"/>
</dbReference>
<dbReference type="SUPFAM" id="SSF56801">
    <property type="entry name" value="Acetyl-CoA synthetase-like"/>
    <property type="match status" value="1"/>
</dbReference>
<dbReference type="SUPFAM" id="SSF69593">
    <property type="entry name" value="Glycerol-3-phosphate (1)-acyltransferase"/>
    <property type="match status" value="1"/>
</dbReference>
<dbReference type="PROSITE" id="PS00455">
    <property type="entry name" value="AMP_BINDING"/>
    <property type="match status" value="1"/>
</dbReference>
<reference key="1">
    <citation type="journal article" date="2008" name="J. Bacteriol.">
        <title>The pangenome structure of Escherichia coli: comparative genomic analysis of E. coli commensal and pathogenic isolates.</title>
        <authorList>
            <person name="Rasko D.A."/>
            <person name="Rosovitz M.J."/>
            <person name="Myers G.S.A."/>
            <person name="Mongodin E.F."/>
            <person name="Fricke W.F."/>
            <person name="Gajer P."/>
            <person name="Crabtree J."/>
            <person name="Sebaihia M."/>
            <person name="Thomson N.R."/>
            <person name="Chaudhuri R."/>
            <person name="Henderson I.R."/>
            <person name="Sperandio V."/>
            <person name="Ravel J."/>
        </authorList>
    </citation>
    <scope>NUCLEOTIDE SEQUENCE [LARGE SCALE GENOMIC DNA]</scope>
    <source>
        <strain>HS</strain>
    </source>
</reference>